<gene>
    <name type="primary">Arl4d</name>
    <name type="synonym">Arf4l</name>
    <name type="synonym">Arl5</name>
</gene>
<reference key="1">
    <citation type="journal article" date="2002" name="J. Cell Sci.">
        <title>A developmentally regulated ARF-like 5 protein (ARL5), localized to nuclei and nucleoli, interacts with heterochromatin protein 1.</title>
        <authorList>
            <person name="Lin C.-Y."/>
            <person name="Li C.-C."/>
            <person name="Huang P.-H."/>
            <person name="Lee F.-J.S."/>
        </authorList>
    </citation>
    <scope>NUCLEOTIDE SEQUENCE [MRNA]</scope>
    <scope>SUBCELLULAR LOCATION</scope>
    <source>
        <strain>BALB/cJ</strain>
        <tissue>Liver</tissue>
    </source>
</reference>
<reference key="2">
    <citation type="journal article" date="2005" name="Science">
        <title>The transcriptional landscape of the mammalian genome.</title>
        <authorList>
            <person name="Carninci P."/>
            <person name="Kasukawa T."/>
            <person name="Katayama S."/>
            <person name="Gough J."/>
            <person name="Frith M.C."/>
            <person name="Maeda N."/>
            <person name="Oyama R."/>
            <person name="Ravasi T."/>
            <person name="Lenhard B."/>
            <person name="Wells C."/>
            <person name="Kodzius R."/>
            <person name="Shimokawa K."/>
            <person name="Bajic V.B."/>
            <person name="Brenner S.E."/>
            <person name="Batalov S."/>
            <person name="Forrest A.R."/>
            <person name="Zavolan M."/>
            <person name="Davis M.J."/>
            <person name="Wilming L.G."/>
            <person name="Aidinis V."/>
            <person name="Allen J.E."/>
            <person name="Ambesi-Impiombato A."/>
            <person name="Apweiler R."/>
            <person name="Aturaliya R.N."/>
            <person name="Bailey T.L."/>
            <person name="Bansal M."/>
            <person name="Baxter L."/>
            <person name="Beisel K.W."/>
            <person name="Bersano T."/>
            <person name="Bono H."/>
            <person name="Chalk A.M."/>
            <person name="Chiu K.P."/>
            <person name="Choudhary V."/>
            <person name="Christoffels A."/>
            <person name="Clutterbuck D.R."/>
            <person name="Crowe M.L."/>
            <person name="Dalla E."/>
            <person name="Dalrymple B.P."/>
            <person name="de Bono B."/>
            <person name="Della Gatta G."/>
            <person name="di Bernardo D."/>
            <person name="Down T."/>
            <person name="Engstrom P."/>
            <person name="Fagiolini M."/>
            <person name="Faulkner G."/>
            <person name="Fletcher C.F."/>
            <person name="Fukushima T."/>
            <person name="Furuno M."/>
            <person name="Futaki S."/>
            <person name="Gariboldi M."/>
            <person name="Georgii-Hemming P."/>
            <person name="Gingeras T.R."/>
            <person name="Gojobori T."/>
            <person name="Green R.E."/>
            <person name="Gustincich S."/>
            <person name="Harbers M."/>
            <person name="Hayashi Y."/>
            <person name="Hensch T.K."/>
            <person name="Hirokawa N."/>
            <person name="Hill D."/>
            <person name="Huminiecki L."/>
            <person name="Iacono M."/>
            <person name="Ikeo K."/>
            <person name="Iwama A."/>
            <person name="Ishikawa T."/>
            <person name="Jakt M."/>
            <person name="Kanapin A."/>
            <person name="Katoh M."/>
            <person name="Kawasawa Y."/>
            <person name="Kelso J."/>
            <person name="Kitamura H."/>
            <person name="Kitano H."/>
            <person name="Kollias G."/>
            <person name="Krishnan S.P."/>
            <person name="Kruger A."/>
            <person name="Kummerfeld S.K."/>
            <person name="Kurochkin I.V."/>
            <person name="Lareau L.F."/>
            <person name="Lazarevic D."/>
            <person name="Lipovich L."/>
            <person name="Liu J."/>
            <person name="Liuni S."/>
            <person name="McWilliam S."/>
            <person name="Madan Babu M."/>
            <person name="Madera M."/>
            <person name="Marchionni L."/>
            <person name="Matsuda H."/>
            <person name="Matsuzawa S."/>
            <person name="Miki H."/>
            <person name="Mignone F."/>
            <person name="Miyake S."/>
            <person name="Morris K."/>
            <person name="Mottagui-Tabar S."/>
            <person name="Mulder N."/>
            <person name="Nakano N."/>
            <person name="Nakauchi H."/>
            <person name="Ng P."/>
            <person name="Nilsson R."/>
            <person name="Nishiguchi S."/>
            <person name="Nishikawa S."/>
            <person name="Nori F."/>
            <person name="Ohara O."/>
            <person name="Okazaki Y."/>
            <person name="Orlando V."/>
            <person name="Pang K.C."/>
            <person name="Pavan W.J."/>
            <person name="Pavesi G."/>
            <person name="Pesole G."/>
            <person name="Petrovsky N."/>
            <person name="Piazza S."/>
            <person name="Reed J."/>
            <person name="Reid J.F."/>
            <person name="Ring B.Z."/>
            <person name="Ringwald M."/>
            <person name="Rost B."/>
            <person name="Ruan Y."/>
            <person name="Salzberg S.L."/>
            <person name="Sandelin A."/>
            <person name="Schneider C."/>
            <person name="Schoenbach C."/>
            <person name="Sekiguchi K."/>
            <person name="Semple C.A."/>
            <person name="Seno S."/>
            <person name="Sessa L."/>
            <person name="Sheng Y."/>
            <person name="Shibata Y."/>
            <person name="Shimada H."/>
            <person name="Shimada K."/>
            <person name="Silva D."/>
            <person name="Sinclair B."/>
            <person name="Sperling S."/>
            <person name="Stupka E."/>
            <person name="Sugiura K."/>
            <person name="Sultana R."/>
            <person name="Takenaka Y."/>
            <person name="Taki K."/>
            <person name="Tammoja K."/>
            <person name="Tan S.L."/>
            <person name="Tang S."/>
            <person name="Taylor M.S."/>
            <person name="Tegner J."/>
            <person name="Teichmann S.A."/>
            <person name="Ueda H.R."/>
            <person name="van Nimwegen E."/>
            <person name="Verardo R."/>
            <person name="Wei C.L."/>
            <person name="Yagi K."/>
            <person name="Yamanishi H."/>
            <person name="Zabarovsky E."/>
            <person name="Zhu S."/>
            <person name="Zimmer A."/>
            <person name="Hide W."/>
            <person name="Bult C."/>
            <person name="Grimmond S.M."/>
            <person name="Teasdale R.D."/>
            <person name="Liu E.T."/>
            <person name="Brusic V."/>
            <person name="Quackenbush J."/>
            <person name="Wahlestedt C."/>
            <person name="Mattick J.S."/>
            <person name="Hume D.A."/>
            <person name="Kai C."/>
            <person name="Sasaki D."/>
            <person name="Tomaru Y."/>
            <person name="Fukuda S."/>
            <person name="Kanamori-Katayama M."/>
            <person name="Suzuki M."/>
            <person name="Aoki J."/>
            <person name="Arakawa T."/>
            <person name="Iida J."/>
            <person name="Imamura K."/>
            <person name="Itoh M."/>
            <person name="Kato T."/>
            <person name="Kawaji H."/>
            <person name="Kawagashira N."/>
            <person name="Kawashima T."/>
            <person name="Kojima M."/>
            <person name="Kondo S."/>
            <person name="Konno H."/>
            <person name="Nakano K."/>
            <person name="Ninomiya N."/>
            <person name="Nishio T."/>
            <person name="Okada M."/>
            <person name="Plessy C."/>
            <person name="Shibata K."/>
            <person name="Shiraki T."/>
            <person name="Suzuki S."/>
            <person name="Tagami M."/>
            <person name="Waki K."/>
            <person name="Watahiki A."/>
            <person name="Okamura-Oho Y."/>
            <person name="Suzuki H."/>
            <person name="Kawai J."/>
            <person name="Hayashizaki Y."/>
        </authorList>
    </citation>
    <scope>NUCLEOTIDE SEQUENCE [LARGE SCALE MRNA]</scope>
    <source>
        <strain>C57BL/6J</strain>
    </source>
</reference>
<reference key="3">
    <citation type="journal article" date="2009" name="PLoS Biol.">
        <title>Lineage-specific biology revealed by a finished genome assembly of the mouse.</title>
        <authorList>
            <person name="Church D.M."/>
            <person name="Goodstadt L."/>
            <person name="Hillier L.W."/>
            <person name="Zody M.C."/>
            <person name="Goldstein S."/>
            <person name="She X."/>
            <person name="Bult C.J."/>
            <person name="Agarwala R."/>
            <person name="Cherry J.L."/>
            <person name="DiCuccio M."/>
            <person name="Hlavina W."/>
            <person name="Kapustin Y."/>
            <person name="Meric P."/>
            <person name="Maglott D."/>
            <person name="Birtle Z."/>
            <person name="Marques A.C."/>
            <person name="Graves T."/>
            <person name="Zhou S."/>
            <person name="Teague B."/>
            <person name="Potamousis K."/>
            <person name="Churas C."/>
            <person name="Place M."/>
            <person name="Herschleb J."/>
            <person name="Runnheim R."/>
            <person name="Forrest D."/>
            <person name="Amos-Landgraf J."/>
            <person name="Schwartz D.C."/>
            <person name="Cheng Z."/>
            <person name="Lindblad-Toh K."/>
            <person name="Eichler E.E."/>
            <person name="Ponting C.P."/>
        </authorList>
    </citation>
    <scope>NUCLEOTIDE SEQUENCE [LARGE SCALE GENOMIC DNA]</scope>
    <source>
        <strain>C57BL/6J</strain>
    </source>
</reference>
<reference key="4">
    <citation type="submission" date="2005-07" db="EMBL/GenBank/DDBJ databases">
        <authorList>
            <person name="Mural R.J."/>
            <person name="Adams M.D."/>
            <person name="Myers E.W."/>
            <person name="Smith H.O."/>
            <person name="Venter J.C."/>
        </authorList>
    </citation>
    <scope>NUCLEOTIDE SEQUENCE [LARGE SCALE GENOMIC DNA]</scope>
</reference>
<reference key="5">
    <citation type="journal article" date="2004" name="Genome Res.">
        <title>The status, quality, and expansion of the NIH full-length cDNA project: the Mammalian Gene Collection (MGC).</title>
        <authorList>
            <consortium name="The MGC Project Team"/>
        </authorList>
    </citation>
    <scope>NUCLEOTIDE SEQUENCE [LARGE SCALE MRNA]</scope>
    <source>
        <tissue>Eye</tissue>
    </source>
</reference>
<proteinExistence type="evidence at transcript level"/>
<protein>
    <recommendedName>
        <fullName>ADP-ribosylation factor-like protein 4D</fullName>
    </recommendedName>
    <alternativeName>
        <fullName>ADP-ribosylation factor-like protein 4L</fullName>
    </alternativeName>
    <alternativeName>
        <fullName>ADP-ribosylation factor-like protein 5</fullName>
    </alternativeName>
</protein>
<sequence>MGNHLTEMAPTASSFLPHFQALHVVVIGLDSAGKTSLLYRLKFKEFVQSVPTKGFNTEKIRVPLGGSRGITFQVWDVGGQEKLRPLWRSYTRRTDGLVFVVDSAETERLEEARMELHRISKASDNQGVPVLVLANKQDQPGALSAAEVEKRLAVRELAAATLTHVQGCSAVDGLGLQPGLEHLYEMILKRKKAPRSSKKRR</sequence>
<keyword id="KW-1003">Cell membrane</keyword>
<keyword id="KW-0963">Cytoplasm</keyword>
<keyword id="KW-0342">GTP-binding</keyword>
<keyword id="KW-0449">Lipoprotein</keyword>
<keyword id="KW-0472">Membrane</keyword>
<keyword id="KW-0519">Myristate</keyword>
<keyword id="KW-0547">Nucleotide-binding</keyword>
<keyword id="KW-0539">Nucleus</keyword>
<keyword id="KW-1185">Reference proteome</keyword>
<organism>
    <name type="scientific">Mus musculus</name>
    <name type="common">Mouse</name>
    <dbReference type="NCBI Taxonomy" id="10090"/>
    <lineage>
        <taxon>Eukaryota</taxon>
        <taxon>Metazoa</taxon>
        <taxon>Chordata</taxon>
        <taxon>Craniata</taxon>
        <taxon>Vertebrata</taxon>
        <taxon>Euteleostomi</taxon>
        <taxon>Mammalia</taxon>
        <taxon>Eutheria</taxon>
        <taxon>Euarchontoglires</taxon>
        <taxon>Glires</taxon>
        <taxon>Rodentia</taxon>
        <taxon>Myomorpha</taxon>
        <taxon>Muroidea</taxon>
        <taxon>Muridae</taxon>
        <taxon>Murinae</taxon>
        <taxon>Mus</taxon>
        <taxon>Mus</taxon>
    </lineage>
</organism>
<feature type="initiator methionine" description="Removed" evidence="2">
    <location>
        <position position="1"/>
    </location>
</feature>
<feature type="chain" id="PRO_0000207465" description="ADP-ribosylation factor-like protein 4D">
    <location>
        <begin position="2"/>
        <end position="201"/>
    </location>
</feature>
<feature type="binding site" evidence="1">
    <location>
        <begin position="28"/>
        <end position="35"/>
    </location>
    <ligand>
        <name>GTP</name>
        <dbReference type="ChEBI" id="CHEBI:37565"/>
    </ligand>
</feature>
<feature type="binding site" evidence="1">
    <location>
        <begin position="76"/>
        <end position="80"/>
    </location>
    <ligand>
        <name>GTP</name>
        <dbReference type="ChEBI" id="CHEBI:37565"/>
    </ligand>
</feature>
<feature type="binding site" evidence="1">
    <location>
        <begin position="135"/>
        <end position="138"/>
    </location>
    <ligand>
        <name>GTP</name>
        <dbReference type="ChEBI" id="CHEBI:37565"/>
    </ligand>
</feature>
<feature type="lipid moiety-binding region" description="N-myristoyl glycine" evidence="2">
    <location>
        <position position="2"/>
    </location>
</feature>
<feature type="sequence conflict" description="In Ref. 1; AAG53667." evidence="4" ref="1">
    <original>E</original>
    <variation>D</variation>
    <location>
        <position position="7"/>
    </location>
</feature>
<feature type="sequence conflict" description="In Ref. 1; AAG53667." evidence="4" ref="1">
    <original>T</original>
    <variation>I</variation>
    <location>
        <position position="106"/>
    </location>
</feature>
<feature type="sequence conflict" description="In Ref. 1; AAG53667." evidence="4" ref="1">
    <original>RM</original>
    <variation>KV</variation>
    <location>
        <begin position="113"/>
        <end position="114"/>
    </location>
</feature>
<feature type="sequence conflict" description="In Ref. 1; AAG53667." evidence="4" ref="1">
    <original>G</original>
    <variation>A</variation>
    <location>
        <position position="167"/>
    </location>
</feature>
<feature type="sequence conflict" description="In Ref. 1; AAG53667." evidence="4" ref="1">
    <original>P</original>
    <variation>Q</variation>
    <location>
        <position position="178"/>
    </location>
</feature>
<feature type="sequence conflict" description="In Ref. 1; AAG53667." evidence="4" ref="1">
    <original>H</original>
    <variation>R</variation>
    <location>
        <position position="182"/>
    </location>
</feature>
<feature type="sequence conflict" description="In Ref. 1; AAG53667." evidence="4" ref="1">
    <original>S</original>
    <variation>G</variation>
    <location>
        <position position="196"/>
    </location>
</feature>
<evidence type="ECO:0000250" key="1"/>
<evidence type="ECO:0000255" key="2"/>
<evidence type="ECO:0000269" key="3">
    <source>
    </source>
</evidence>
<evidence type="ECO:0000305" key="4"/>
<accession>Q99PE9</accession>
<accession>Q9CQB1</accession>
<name>ARL4D_MOUSE</name>
<comment type="function">
    <text evidence="1">Small GTP-binding protein which cycles between an inactive GDP-bound and an active GTP-bound form, and the rate of cycling is regulated by guanine nucleotide exchange factors (GEF) and GTPase-activating proteins (GAP). GTP-binding protein that does not act as an allosteric activator of the cholera toxin catalytic subunit. Recruits CYTH1, CYTH2, CYTH3 and CYTH4 to the plasma membrane in GDP-bound form (By similarity).</text>
</comment>
<comment type="subunit">
    <text evidence="1">Interacts with CYTH2; the interaction is direct and ARL4D GTP-dependent. Does not interact with ARL4D (By similarity).</text>
</comment>
<comment type="subcellular location">
    <subcellularLocation>
        <location evidence="1">Nucleus</location>
        <location evidence="1">Nucleolus</location>
    </subcellularLocation>
    <subcellularLocation>
        <location evidence="3">Cell membrane</location>
    </subcellularLocation>
    <subcellularLocation>
        <location evidence="1">Nucleus</location>
    </subcellularLocation>
    <subcellularLocation>
        <location evidence="1">Cytoplasm</location>
    </subcellularLocation>
</comment>
<comment type="similarity">
    <text evidence="4">Belongs to the small GTPase superfamily. Arf family.</text>
</comment>
<dbReference type="EMBL" id="AF312686">
    <property type="protein sequence ID" value="AAG53667.1"/>
    <property type="molecule type" value="mRNA"/>
</dbReference>
<dbReference type="EMBL" id="AK004126">
    <property type="protein sequence ID" value="BAB23183.1"/>
    <property type="molecule type" value="mRNA"/>
</dbReference>
<dbReference type="EMBL" id="AK013320">
    <property type="protein sequence ID" value="BAB28789.1"/>
    <property type="molecule type" value="mRNA"/>
</dbReference>
<dbReference type="EMBL" id="AL590994">
    <property type="status" value="NOT_ANNOTATED_CDS"/>
    <property type="molecule type" value="Genomic_DNA"/>
</dbReference>
<dbReference type="EMBL" id="CH466558">
    <property type="protein sequence ID" value="EDL34064.1"/>
    <property type="molecule type" value="Genomic_DNA"/>
</dbReference>
<dbReference type="EMBL" id="BC016113">
    <property type="protein sequence ID" value="AAH16113.1"/>
    <property type="molecule type" value="mRNA"/>
</dbReference>
<dbReference type="CCDS" id="CCDS36336.1"/>
<dbReference type="RefSeq" id="NP_079680.1">
    <property type="nucleotide sequence ID" value="NM_025404.3"/>
</dbReference>
<dbReference type="SMR" id="Q99PE9"/>
<dbReference type="BioGRID" id="219856">
    <property type="interactions" value="6"/>
</dbReference>
<dbReference type="FunCoup" id="Q99PE9">
    <property type="interactions" value="320"/>
</dbReference>
<dbReference type="MINT" id="Q99PE9"/>
<dbReference type="STRING" id="10090.ENSMUSP00000035918"/>
<dbReference type="PhosphoSitePlus" id="Q99PE9"/>
<dbReference type="PaxDb" id="10090-ENSMUSP00000035918"/>
<dbReference type="ProteomicsDB" id="265104"/>
<dbReference type="Antibodypedia" id="29560">
    <property type="antibodies" value="120 antibodies from 26 providers"/>
</dbReference>
<dbReference type="DNASU" id="80981"/>
<dbReference type="Ensembl" id="ENSMUST00000039388.3">
    <property type="protein sequence ID" value="ENSMUSP00000035918.3"/>
    <property type="gene ID" value="ENSMUSG00000034936.3"/>
</dbReference>
<dbReference type="GeneID" id="80981"/>
<dbReference type="KEGG" id="mmu:80981"/>
<dbReference type="UCSC" id="uc007lpq.2">
    <property type="organism name" value="mouse"/>
</dbReference>
<dbReference type="AGR" id="MGI:1933155"/>
<dbReference type="CTD" id="379"/>
<dbReference type="MGI" id="MGI:1933155">
    <property type="gene designation" value="Arl4d"/>
</dbReference>
<dbReference type="VEuPathDB" id="HostDB:ENSMUSG00000034936"/>
<dbReference type="eggNOG" id="KOG0070">
    <property type="taxonomic scope" value="Eukaryota"/>
</dbReference>
<dbReference type="GeneTree" id="ENSGT00940000161341"/>
<dbReference type="HOGENOM" id="CLU_040729_9_2_1"/>
<dbReference type="InParanoid" id="Q99PE9"/>
<dbReference type="OMA" id="YTLHHVQ"/>
<dbReference type="OrthoDB" id="2011769at2759"/>
<dbReference type="PhylomeDB" id="Q99PE9"/>
<dbReference type="TreeFam" id="TF105464"/>
<dbReference type="BioGRID-ORCS" id="80981">
    <property type="hits" value="2 hits in 80 CRISPR screens"/>
</dbReference>
<dbReference type="ChiTaRS" id="Arl4d">
    <property type="organism name" value="mouse"/>
</dbReference>
<dbReference type="PRO" id="PR:Q99PE9"/>
<dbReference type="Proteomes" id="UP000000589">
    <property type="component" value="Chromosome 11"/>
</dbReference>
<dbReference type="RNAct" id="Q99PE9">
    <property type="molecule type" value="protein"/>
</dbReference>
<dbReference type="Bgee" id="ENSMUSG00000034936">
    <property type="expression patterns" value="Expressed in decidua and 231 other cell types or tissues"/>
</dbReference>
<dbReference type="GO" id="GO:0005737">
    <property type="term" value="C:cytoplasm"/>
    <property type="evidence" value="ECO:0000250"/>
    <property type="project" value="UniProtKB"/>
</dbReference>
<dbReference type="GO" id="GO:0005730">
    <property type="term" value="C:nucleolus"/>
    <property type="evidence" value="ECO:0007669"/>
    <property type="project" value="UniProtKB-SubCell"/>
</dbReference>
<dbReference type="GO" id="GO:0005634">
    <property type="term" value="C:nucleus"/>
    <property type="evidence" value="ECO:0000314"/>
    <property type="project" value="MGI"/>
</dbReference>
<dbReference type="GO" id="GO:0005886">
    <property type="term" value="C:plasma membrane"/>
    <property type="evidence" value="ECO:0000250"/>
    <property type="project" value="UniProtKB"/>
</dbReference>
<dbReference type="GO" id="GO:0005525">
    <property type="term" value="F:GTP binding"/>
    <property type="evidence" value="ECO:0007669"/>
    <property type="project" value="UniProtKB-KW"/>
</dbReference>
<dbReference type="GO" id="GO:0003924">
    <property type="term" value="F:GTPase activity"/>
    <property type="evidence" value="ECO:0007669"/>
    <property type="project" value="InterPro"/>
</dbReference>
<dbReference type="CDD" id="cd04152">
    <property type="entry name" value="Arl4_Arl7"/>
    <property type="match status" value="1"/>
</dbReference>
<dbReference type="FunFam" id="3.40.50.300:FF:000458">
    <property type="entry name" value="ADP-ribosylation factor-like protein 4C"/>
    <property type="match status" value="1"/>
</dbReference>
<dbReference type="Gene3D" id="3.40.50.300">
    <property type="entry name" value="P-loop containing nucleotide triphosphate hydrolases"/>
    <property type="match status" value="1"/>
</dbReference>
<dbReference type="InterPro" id="IPR027417">
    <property type="entry name" value="P-loop_NTPase"/>
</dbReference>
<dbReference type="InterPro" id="IPR005225">
    <property type="entry name" value="Small_GTP-bd"/>
</dbReference>
<dbReference type="InterPro" id="IPR024156">
    <property type="entry name" value="Small_GTPase_ARF"/>
</dbReference>
<dbReference type="InterPro" id="IPR006689">
    <property type="entry name" value="Small_GTPase_ARF/SAR"/>
</dbReference>
<dbReference type="NCBIfam" id="TIGR00231">
    <property type="entry name" value="small_GTP"/>
    <property type="match status" value="1"/>
</dbReference>
<dbReference type="PANTHER" id="PTHR11711">
    <property type="entry name" value="ADP RIBOSYLATION FACTOR-RELATED"/>
    <property type="match status" value="1"/>
</dbReference>
<dbReference type="Pfam" id="PF00025">
    <property type="entry name" value="Arf"/>
    <property type="match status" value="1"/>
</dbReference>
<dbReference type="PRINTS" id="PR00328">
    <property type="entry name" value="SAR1GTPBP"/>
</dbReference>
<dbReference type="SMART" id="SM00177">
    <property type="entry name" value="ARF"/>
    <property type="match status" value="1"/>
</dbReference>
<dbReference type="SMART" id="SM00175">
    <property type="entry name" value="RAB"/>
    <property type="match status" value="1"/>
</dbReference>
<dbReference type="SMART" id="SM00178">
    <property type="entry name" value="SAR"/>
    <property type="match status" value="1"/>
</dbReference>
<dbReference type="SUPFAM" id="SSF52540">
    <property type="entry name" value="P-loop containing nucleoside triphosphate hydrolases"/>
    <property type="match status" value="1"/>
</dbReference>
<dbReference type="PROSITE" id="PS51417">
    <property type="entry name" value="ARF"/>
    <property type="match status" value="1"/>
</dbReference>